<proteinExistence type="inferred from homology"/>
<name>HFLD_XANCP</name>
<dbReference type="EMBL" id="AE008922">
    <property type="protein sequence ID" value="AAM41252.1"/>
    <property type="status" value="ALT_INIT"/>
    <property type="molecule type" value="Genomic_DNA"/>
</dbReference>
<dbReference type="RefSeq" id="NP_637328.1">
    <property type="nucleotide sequence ID" value="NC_003902.1"/>
</dbReference>
<dbReference type="RefSeq" id="WP_029217215.1">
    <property type="nucleotide sequence ID" value="NC_003902.1"/>
</dbReference>
<dbReference type="SMR" id="Q8P9A2"/>
<dbReference type="STRING" id="190485.XCC1963"/>
<dbReference type="EnsemblBacteria" id="AAM41252">
    <property type="protein sequence ID" value="AAM41252"/>
    <property type="gene ID" value="XCC1963"/>
</dbReference>
<dbReference type="KEGG" id="xcc:XCC1963"/>
<dbReference type="PATRIC" id="fig|190485.4.peg.2098"/>
<dbReference type="eggNOG" id="COG2915">
    <property type="taxonomic scope" value="Bacteria"/>
</dbReference>
<dbReference type="HOGENOM" id="CLU_098920_0_0_6"/>
<dbReference type="OrthoDB" id="9788031at2"/>
<dbReference type="Proteomes" id="UP000001010">
    <property type="component" value="Chromosome"/>
</dbReference>
<dbReference type="GO" id="GO:0005737">
    <property type="term" value="C:cytoplasm"/>
    <property type="evidence" value="ECO:0007669"/>
    <property type="project" value="UniProtKB-SubCell"/>
</dbReference>
<dbReference type="GO" id="GO:0005886">
    <property type="term" value="C:plasma membrane"/>
    <property type="evidence" value="ECO:0007669"/>
    <property type="project" value="UniProtKB-SubCell"/>
</dbReference>
<dbReference type="FunFam" id="1.10.3890.10:FF:000004">
    <property type="entry name" value="High frequency lysogenization protein HflD homolog"/>
    <property type="match status" value="1"/>
</dbReference>
<dbReference type="Gene3D" id="1.10.3890.10">
    <property type="entry name" value="HflD-like"/>
    <property type="match status" value="1"/>
</dbReference>
<dbReference type="HAMAP" id="MF_00695">
    <property type="entry name" value="HflD_protein"/>
    <property type="match status" value="1"/>
</dbReference>
<dbReference type="InterPro" id="IPR007451">
    <property type="entry name" value="HflD"/>
</dbReference>
<dbReference type="InterPro" id="IPR035932">
    <property type="entry name" value="HflD-like_sf"/>
</dbReference>
<dbReference type="NCBIfam" id="NF001246">
    <property type="entry name" value="PRK00218.1-2"/>
    <property type="match status" value="1"/>
</dbReference>
<dbReference type="NCBIfam" id="NF001250">
    <property type="entry name" value="PRK00218.1-6"/>
    <property type="match status" value="1"/>
</dbReference>
<dbReference type="PANTHER" id="PTHR38100">
    <property type="entry name" value="HIGH FREQUENCY LYSOGENIZATION PROTEIN HFLD"/>
    <property type="match status" value="1"/>
</dbReference>
<dbReference type="PANTHER" id="PTHR38100:SF1">
    <property type="entry name" value="HIGH FREQUENCY LYSOGENIZATION PROTEIN HFLD"/>
    <property type="match status" value="1"/>
</dbReference>
<dbReference type="Pfam" id="PF04356">
    <property type="entry name" value="DUF489"/>
    <property type="match status" value="1"/>
</dbReference>
<dbReference type="SUPFAM" id="SSF101322">
    <property type="entry name" value="YcfC-like"/>
    <property type="match status" value="1"/>
</dbReference>
<reference key="1">
    <citation type="journal article" date="2002" name="Nature">
        <title>Comparison of the genomes of two Xanthomonas pathogens with differing host specificities.</title>
        <authorList>
            <person name="da Silva A.C.R."/>
            <person name="Ferro J.A."/>
            <person name="Reinach F.C."/>
            <person name="Farah C.S."/>
            <person name="Furlan L.R."/>
            <person name="Quaggio R.B."/>
            <person name="Monteiro-Vitorello C.B."/>
            <person name="Van Sluys M.A."/>
            <person name="Almeida N.F. Jr."/>
            <person name="Alves L.M.C."/>
            <person name="do Amaral A.M."/>
            <person name="Bertolini M.C."/>
            <person name="Camargo L.E.A."/>
            <person name="Camarotte G."/>
            <person name="Cannavan F."/>
            <person name="Cardozo J."/>
            <person name="Chambergo F."/>
            <person name="Ciapina L.P."/>
            <person name="Cicarelli R.M.B."/>
            <person name="Coutinho L.L."/>
            <person name="Cursino-Santos J.R."/>
            <person name="El-Dorry H."/>
            <person name="Faria J.B."/>
            <person name="Ferreira A.J.S."/>
            <person name="Ferreira R.C.C."/>
            <person name="Ferro M.I.T."/>
            <person name="Formighieri E.F."/>
            <person name="Franco M.C."/>
            <person name="Greggio C.C."/>
            <person name="Gruber A."/>
            <person name="Katsuyama A.M."/>
            <person name="Kishi L.T."/>
            <person name="Leite R.P."/>
            <person name="Lemos E.G.M."/>
            <person name="Lemos M.V.F."/>
            <person name="Locali E.C."/>
            <person name="Machado M.A."/>
            <person name="Madeira A.M.B.N."/>
            <person name="Martinez-Rossi N.M."/>
            <person name="Martins E.C."/>
            <person name="Meidanis J."/>
            <person name="Menck C.F.M."/>
            <person name="Miyaki C.Y."/>
            <person name="Moon D.H."/>
            <person name="Moreira L.M."/>
            <person name="Novo M.T.M."/>
            <person name="Okura V.K."/>
            <person name="Oliveira M.C."/>
            <person name="Oliveira V.R."/>
            <person name="Pereira H.A."/>
            <person name="Rossi A."/>
            <person name="Sena J.A.D."/>
            <person name="Silva C."/>
            <person name="de Souza R.F."/>
            <person name="Spinola L.A.F."/>
            <person name="Takita M.A."/>
            <person name="Tamura R.E."/>
            <person name="Teixeira E.C."/>
            <person name="Tezza R.I.D."/>
            <person name="Trindade dos Santos M."/>
            <person name="Truffi D."/>
            <person name="Tsai S.M."/>
            <person name="White F.F."/>
            <person name="Setubal J.C."/>
            <person name="Kitajima J.P."/>
        </authorList>
    </citation>
    <scope>NUCLEOTIDE SEQUENCE [LARGE SCALE GENOMIC DNA]</scope>
    <source>
        <strain>ATCC 33913 / DSM 3586 / NCPPB 528 / LMG 568 / P 25</strain>
    </source>
</reference>
<sequence length="204" mass="22005">MSSSMDHRVLALAGVAQALQQVRRIAETGHSEAATVRTAVDSVFRVDAATPEGVYGSSADVAPGLRLLHNYFTNQGKDDMLPRLALAVLQLERRFVRDHSTVETVSKGIEAAARQAQTLGDSAHPDVLSALGALYAQTISHLRPKVMVQGNPHYLGQAGVVAEIRALLLAAVRSAVLWRQMGGSLWDFLFAKRAMIEAVARALR</sequence>
<evidence type="ECO:0000255" key="1">
    <source>
        <dbReference type="HAMAP-Rule" id="MF_00695"/>
    </source>
</evidence>
<evidence type="ECO:0000305" key="2"/>
<protein>
    <recommendedName>
        <fullName evidence="1">High frequency lysogenization protein HflD homolog</fullName>
    </recommendedName>
</protein>
<feature type="chain" id="PRO_0000071595" description="High frequency lysogenization protein HflD homolog">
    <location>
        <begin position="1"/>
        <end position="204"/>
    </location>
</feature>
<comment type="subcellular location">
    <subcellularLocation>
        <location>Cytoplasm</location>
    </subcellularLocation>
    <subcellularLocation>
        <location evidence="1">Cell inner membrane</location>
        <topology evidence="1">Peripheral membrane protein</topology>
        <orientation evidence="1">Cytoplasmic side</orientation>
    </subcellularLocation>
</comment>
<comment type="similarity">
    <text evidence="1">Belongs to the HflD family.</text>
</comment>
<comment type="sequence caution" evidence="2">
    <conflict type="erroneous initiation">
        <sequence resource="EMBL-CDS" id="AAM41252"/>
    </conflict>
</comment>
<keyword id="KW-0997">Cell inner membrane</keyword>
<keyword id="KW-1003">Cell membrane</keyword>
<keyword id="KW-0963">Cytoplasm</keyword>
<keyword id="KW-0472">Membrane</keyword>
<keyword id="KW-1185">Reference proteome</keyword>
<accession>Q8P9A2</accession>
<gene>
    <name evidence="1" type="primary">hflD</name>
    <name type="ordered locus">XCC1963</name>
</gene>
<organism>
    <name type="scientific">Xanthomonas campestris pv. campestris (strain ATCC 33913 / DSM 3586 / NCPPB 528 / LMG 568 / P 25)</name>
    <dbReference type="NCBI Taxonomy" id="190485"/>
    <lineage>
        <taxon>Bacteria</taxon>
        <taxon>Pseudomonadati</taxon>
        <taxon>Pseudomonadota</taxon>
        <taxon>Gammaproteobacteria</taxon>
        <taxon>Lysobacterales</taxon>
        <taxon>Lysobacteraceae</taxon>
        <taxon>Xanthomonas</taxon>
    </lineage>
</organism>